<accession>Q4UND7</accession>
<protein>
    <recommendedName>
        <fullName evidence="1">Elongation factor Ts</fullName>
        <shortName evidence="1">EF-Ts</shortName>
    </recommendedName>
</protein>
<sequence>MSEINISAAAVKELREKTGAGMMDCKKALIETSGNFEEAIDFLRKKGLAAAAKKAGRIASEGLTAAKVDGLTGVVVEVNSETDFVARNEQFQDLVKDIANLAVIAKTIDTLKTSKMQSGKSVEEEIIENIATIGENLTLRRMDILEISEGAIGSYVHNEVVPNLGKISVLVGLESNAKDKTKLEALAKQVAVHVAGNNPQSIDDSSLDQALVERERKVFFEKSKEEGKPDNIIEKMVEGRIRKFFSEVVLLQQNFLFEPKLTVAEVIKNAEKELGAEIKIAKFIRYELGEGIEHEEKNFADEVAAITQG</sequence>
<proteinExistence type="inferred from homology"/>
<dbReference type="EMBL" id="CP000053">
    <property type="protein sequence ID" value="AAY60921.1"/>
    <property type="molecule type" value="Genomic_DNA"/>
</dbReference>
<dbReference type="SMR" id="Q4UND7"/>
<dbReference type="STRING" id="315456.RF_0070"/>
<dbReference type="KEGG" id="rfe:RF_0070"/>
<dbReference type="eggNOG" id="COG0264">
    <property type="taxonomic scope" value="Bacteria"/>
</dbReference>
<dbReference type="HOGENOM" id="CLU_047155_2_0_5"/>
<dbReference type="OrthoDB" id="9808348at2"/>
<dbReference type="Proteomes" id="UP000008548">
    <property type="component" value="Chromosome"/>
</dbReference>
<dbReference type="GO" id="GO:0005737">
    <property type="term" value="C:cytoplasm"/>
    <property type="evidence" value="ECO:0007669"/>
    <property type="project" value="UniProtKB-SubCell"/>
</dbReference>
<dbReference type="GO" id="GO:0003746">
    <property type="term" value="F:translation elongation factor activity"/>
    <property type="evidence" value="ECO:0007669"/>
    <property type="project" value="UniProtKB-UniRule"/>
</dbReference>
<dbReference type="CDD" id="cd14275">
    <property type="entry name" value="UBA_EF-Ts"/>
    <property type="match status" value="1"/>
</dbReference>
<dbReference type="FunFam" id="1.10.286.20:FF:000001">
    <property type="entry name" value="Elongation factor Ts"/>
    <property type="match status" value="1"/>
</dbReference>
<dbReference type="FunFam" id="1.10.8.10:FF:000001">
    <property type="entry name" value="Elongation factor Ts"/>
    <property type="match status" value="1"/>
</dbReference>
<dbReference type="Gene3D" id="1.10.286.20">
    <property type="match status" value="1"/>
</dbReference>
<dbReference type="Gene3D" id="1.10.8.10">
    <property type="entry name" value="DNA helicase RuvA subunit, C-terminal domain"/>
    <property type="match status" value="1"/>
</dbReference>
<dbReference type="Gene3D" id="3.30.479.20">
    <property type="entry name" value="Elongation factor Ts, dimerisation domain"/>
    <property type="match status" value="2"/>
</dbReference>
<dbReference type="HAMAP" id="MF_00050">
    <property type="entry name" value="EF_Ts"/>
    <property type="match status" value="1"/>
</dbReference>
<dbReference type="InterPro" id="IPR036402">
    <property type="entry name" value="EF-Ts_dimer_sf"/>
</dbReference>
<dbReference type="InterPro" id="IPR001816">
    <property type="entry name" value="Transl_elong_EFTs/EF1B"/>
</dbReference>
<dbReference type="InterPro" id="IPR014039">
    <property type="entry name" value="Transl_elong_EFTs/EF1B_dimer"/>
</dbReference>
<dbReference type="InterPro" id="IPR018101">
    <property type="entry name" value="Transl_elong_Ts_CS"/>
</dbReference>
<dbReference type="InterPro" id="IPR009060">
    <property type="entry name" value="UBA-like_sf"/>
</dbReference>
<dbReference type="NCBIfam" id="TIGR00116">
    <property type="entry name" value="tsf"/>
    <property type="match status" value="1"/>
</dbReference>
<dbReference type="PANTHER" id="PTHR11741">
    <property type="entry name" value="ELONGATION FACTOR TS"/>
    <property type="match status" value="1"/>
</dbReference>
<dbReference type="PANTHER" id="PTHR11741:SF0">
    <property type="entry name" value="ELONGATION FACTOR TS, MITOCHONDRIAL"/>
    <property type="match status" value="1"/>
</dbReference>
<dbReference type="Pfam" id="PF00889">
    <property type="entry name" value="EF_TS"/>
    <property type="match status" value="1"/>
</dbReference>
<dbReference type="SUPFAM" id="SSF54713">
    <property type="entry name" value="Elongation factor Ts (EF-Ts), dimerisation domain"/>
    <property type="match status" value="1"/>
</dbReference>
<dbReference type="SUPFAM" id="SSF46934">
    <property type="entry name" value="UBA-like"/>
    <property type="match status" value="1"/>
</dbReference>
<dbReference type="PROSITE" id="PS01126">
    <property type="entry name" value="EF_TS_1"/>
    <property type="match status" value="1"/>
</dbReference>
<dbReference type="PROSITE" id="PS01127">
    <property type="entry name" value="EF_TS_2"/>
    <property type="match status" value="1"/>
</dbReference>
<feature type="chain" id="PRO_0000241522" description="Elongation factor Ts">
    <location>
        <begin position="1"/>
        <end position="309"/>
    </location>
</feature>
<feature type="region of interest" description="Involved in Mg(2+) ion dislocation from EF-Tu" evidence="1">
    <location>
        <begin position="82"/>
        <end position="85"/>
    </location>
</feature>
<name>EFTS_RICFE</name>
<evidence type="ECO:0000255" key="1">
    <source>
        <dbReference type="HAMAP-Rule" id="MF_00050"/>
    </source>
</evidence>
<keyword id="KW-0963">Cytoplasm</keyword>
<keyword id="KW-0251">Elongation factor</keyword>
<keyword id="KW-0648">Protein biosynthesis</keyword>
<comment type="function">
    <text evidence="1">Associates with the EF-Tu.GDP complex and induces the exchange of GDP to GTP. It remains bound to the aminoacyl-tRNA.EF-Tu.GTP complex up to the GTP hydrolysis stage on the ribosome.</text>
</comment>
<comment type="subcellular location">
    <subcellularLocation>
        <location evidence="1">Cytoplasm</location>
    </subcellularLocation>
</comment>
<comment type="similarity">
    <text evidence="1">Belongs to the EF-Ts family.</text>
</comment>
<organism>
    <name type="scientific">Rickettsia felis (strain ATCC VR-1525 / URRWXCal2)</name>
    <name type="common">Rickettsia azadi</name>
    <dbReference type="NCBI Taxonomy" id="315456"/>
    <lineage>
        <taxon>Bacteria</taxon>
        <taxon>Pseudomonadati</taxon>
        <taxon>Pseudomonadota</taxon>
        <taxon>Alphaproteobacteria</taxon>
        <taxon>Rickettsiales</taxon>
        <taxon>Rickettsiaceae</taxon>
        <taxon>Rickettsieae</taxon>
        <taxon>Rickettsia</taxon>
        <taxon>spotted fever group</taxon>
    </lineage>
</organism>
<gene>
    <name evidence="1" type="primary">tsf</name>
    <name type="ordered locus">RF_0070</name>
</gene>
<reference key="1">
    <citation type="journal article" date="2005" name="PLoS Biol.">
        <title>The genome sequence of Rickettsia felis identifies the first putative conjugative plasmid in an obligate intracellular parasite.</title>
        <authorList>
            <person name="Ogata H."/>
            <person name="Renesto P."/>
            <person name="Audic S."/>
            <person name="Robert C."/>
            <person name="Blanc G."/>
            <person name="Fournier P.-E."/>
            <person name="Parinello H."/>
            <person name="Claverie J.-M."/>
            <person name="Raoult D."/>
        </authorList>
    </citation>
    <scope>NUCLEOTIDE SEQUENCE [LARGE SCALE GENOMIC DNA]</scope>
    <source>
        <strain>ATCC VR-1525 / URRWXCal2</strain>
    </source>
</reference>